<evidence type="ECO:0000255" key="1">
    <source>
        <dbReference type="PROSITE-ProRule" id="PRU01020"/>
    </source>
</evidence>
<organism>
    <name type="scientific">Dictyostelium discoideum</name>
    <name type="common">Social amoeba</name>
    <dbReference type="NCBI Taxonomy" id="44689"/>
    <lineage>
        <taxon>Eukaryota</taxon>
        <taxon>Amoebozoa</taxon>
        <taxon>Evosea</taxon>
        <taxon>Eumycetozoa</taxon>
        <taxon>Dictyostelia</taxon>
        <taxon>Dictyosteliales</taxon>
        <taxon>Dictyosteliaceae</taxon>
        <taxon>Dictyostelium</taxon>
    </lineage>
</organism>
<sequence>MDSGLSTPQLPITNMNNEITTDWDKAMNLIMTCVSGHIHSRMFNIVMKLNICDILEDGPKSIKQVSDTIGMDENSCFRLLRYFVAHELFSEDKSNIGTFEKTSISTMFSSKGKLRPMGERYTHDLHYKMFESLPETFANGHSNATKSVGVNHFWELFDLHPQYKDLFNQTMKVYTEAAISNITQSKGIDFSQYDTVVDIGGNHGLLIGNLLEIYPTIKHGINFDLDVVINSSDQTLRYSHPRLTHIPGNFFESVPESDCYIMKFILHDWPTQDCVKILKTISKSMKPNAKIHLFEIIIDPRKGYSKYETYIDILMFQMVNAKERTLDEWKELFELADFKLERVVDDIKTGCMVVSKK</sequence>
<reference key="1">
    <citation type="journal article" date="2005" name="Nature">
        <title>The genome of the social amoeba Dictyostelium discoideum.</title>
        <authorList>
            <person name="Eichinger L."/>
            <person name="Pachebat J.A."/>
            <person name="Gloeckner G."/>
            <person name="Rajandream M.A."/>
            <person name="Sucgang R."/>
            <person name="Berriman M."/>
            <person name="Song J."/>
            <person name="Olsen R."/>
            <person name="Szafranski K."/>
            <person name="Xu Q."/>
            <person name="Tunggal B."/>
            <person name="Kummerfeld S."/>
            <person name="Madera M."/>
            <person name="Konfortov B.A."/>
            <person name="Rivero F."/>
            <person name="Bankier A.T."/>
            <person name="Lehmann R."/>
            <person name="Hamlin N."/>
            <person name="Davies R."/>
            <person name="Gaudet P."/>
            <person name="Fey P."/>
            <person name="Pilcher K."/>
            <person name="Chen G."/>
            <person name="Saunders D."/>
            <person name="Sodergren E.J."/>
            <person name="Davis P."/>
            <person name="Kerhornou A."/>
            <person name="Nie X."/>
            <person name="Hall N."/>
            <person name="Anjard C."/>
            <person name="Hemphill L."/>
            <person name="Bason N."/>
            <person name="Farbrother P."/>
            <person name="Desany B."/>
            <person name="Just E."/>
            <person name="Morio T."/>
            <person name="Rost R."/>
            <person name="Churcher C.M."/>
            <person name="Cooper J."/>
            <person name="Haydock S."/>
            <person name="van Driessche N."/>
            <person name="Cronin A."/>
            <person name="Goodhead I."/>
            <person name="Muzny D.M."/>
            <person name="Mourier T."/>
            <person name="Pain A."/>
            <person name="Lu M."/>
            <person name="Harper D."/>
            <person name="Lindsay R."/>
            <person name="Hauser H."/>
            <person name="James K.D."/>
            <person name="Quiles M."/>
            <person name="Madan Babu M."/>
            <person name="Saito T."/>
            <person name="Buchrieser C."/>
            <person name="Wardroper A."/>
            <person name="Felder M."/>
            <person name="Thangavelu M."/>
            <person name="Johnson D."/>
            <person name="Knights A."/>
            <person name="Loulseged H."/>
            <person name="Mungall K.L."/>
            <person name="Oliver K."/>
            <person name="Price C."/>
            <person name="Quail M.A."/>
            <person name="Urushihara H."/>
            <person name="Hernandez J."/>
            <person name="Rabbinowitsch E."/>
            <person name="Steffen D."/>
            <person name="Sanders M."/>
            <person name="Ma J."/>
            <person name="Kohara Y."/>
            <person name="Sharp S."/>
            <person name="Simmonds M.N."/>
            <person name="Spiegler S."/>
            <person name="Tivey A."/>
            <person name="Sugano S."/>
            <person name="White B."/>
            <person name="Walker D."/>
            <person name="Woodward J.R."/>
            <person name="Winckler T."/>
            <person name="Tanaka Y."/>
            <person name="Shaulsky G."/>
            <person name="Schleicher M."/>
            <person name="Weinstock G.M."/>
            <person name="Rosenthal A."/>
            <person name="Cox E.C."/>
            <person name="Chisholm R.L."/>
            <person name="Gibbs R.A."/>
            <person name="Loomis W.F."/>
            <person name="Platzer M."/>
            <person name="Kay R.R."/>
            <person name="Williams J.G."/>
            <person name="Dear P.H."/>
            <person name="Noegel A.A."/>
            <person name="Barrell B.G."/>
            <person name="Kuspa A."/>
        </authorList>
    </citation>
    <scope>NUCLEOTIDE SEQUENCE [LARGE SCALE GENOMIC DNA]</scope>
    <source>
        <strain>AX4</strain>
    </source>
</reference>
<dbReference type="EC" id="2.1.1.-"/>
<dbReference type="EMBL" id="AAFI02000149">
    <property type="protein sequence ID" value="EAL62512.1"/>
    <property type="molecule type" value="Genomic_DNA"/>
</dbReference>
<dbReference type="RefSeq" id="XP_636017.1">
    <property type="nucleotide sequence ID" value="XM_630925.1"/>
</dbReference>
<dbReference type="SMR" id="Q54GZ0"/>
<dbReference type="PaxDb" id="44689-DDB0266734"/>
<dbReference type="EnsemblProtists" id="EAL62512">
    <property type="protein sequence ID" value="EAL62512"/>
    <property type="gene ID" value="DDB_G0289823"/>
</dbReference>
<dbReference type="GeneID" id="8627343"/>
<dbReference type="KEGG" id="ddi:DDB_G0289823"/>
<dbReference type="dictyBase" id="DDB_G0289823">
    <property type="gene designation" value="omt9"/>
</dbReference>
<dbReference type="VEuPathDB" id="AmoebaDB:DDB_G0289823"/>
<dbReference type="eggNOG" id="KOG3178">
    <property type="taxonomic scope" value="Eukaryota"/>
</dbReference>
<dbReference type="HOGENOM" id="CLU_005533_12_0_1"/>
<dbReference type="InParanoid" id="Q54GZ0"/>
<dbReference type="OMA" id="MMMTANG"/>
<dbReference type="PhylomeDB" id="Q54GZ0"/>
<dbReference type="PRO" id="PR:Q54GZ0"/>
<dbReference type="Proteomes" id="UP000002195">
    <property type="component" value="Chromosome 5"/>
</dbReference>
<dbReference type="GO" id="GO:0106268">
    <property type="term" value="F:3,5-dichloro-THPH methyl transferase activity"/>
    <property type="evidence" value="ECO:0007669"/>
    <property type="project" value="RHEA"/>
</dbReference>
<dbReference type="GO" id="GO:0008171">
    <property type="term" value="F:O-methyltransferase activity"/>
    <property type="evidence" value="ECO:0000318"/>
    <property type="project" value="GO_Central"/>
</dbReference>
<dbReference type="GO" id="GO:0046983">
    <property type="term" value="F:protein dimerization activity"/>
    <property type="evidence" value="ECO:0007669"/>
    <property type="project" value="InterPro"/>
</dbReference>
<dbReference type="GO" id="GO:0008757">
    <property type="term" value="F:S-adenosylmethionine-dependent methyltransferase activity"/>
    <property type="evidence" value="ECO:0000318"/>
    <property type="project" value="GO_Central"/>
</dbReference>
<dbReference type="GO" id="GO:0009058">
    <property type="term" value="P:biosynthetic process"/>
    <property type="evidence" value="ECO:0000318"/>
    <property type="project" value="GO_Central"/>
</dbReference>
<dbReference type="GO" id="GO:0032259">
    <property type="term" value="P:methylation"/>
    <property type="evidence" value="ECO:0000318"/>
    <property type="project" value="GO_Central"/>
</dbReference>
<dbReference type="FunFam" id="3.40.50.150:FF:000407">
    <property type="entry name" value="O-methyltransferase 4"/>
    <property type="match status" value="1"/>
</dbReference>
<dbReference type="FunFam" id="1.10.10.10:FF:000895">
    <property type="entry name" value="O-methyltransferase 9"/>
    <property type="match status" value="1"/>
</dbReference>
<dbReference type="Gene3D" id="3.40.50.150">
    <property type="entry name" value="Vaccinia Virus protein VP39"/>
    <property type="match status" value="1"/>
</dbReference>
<dbReference type="Gene3D" id="1.10.10.10">
    <property type="entry name" value="Winged helix-like DNA-binding domain superfamily/Winged helix DNA-binding domain"/>
    <property type="match status" value="1"/>
</dbReference>
<dbReference type="InterPro" id="IPR016461">
    <property type="entry name" value="COMT-like"/>
</dbReference>
<dbReference type="InterPro" id="IPR001077">
    <property type="entry name" value="O_MeTrfase_dom"/>
</dbReference>
<dbReference type="InterPro" id="IPR012967">
    <property type="entry name" value="Plant_O-MeTrfase_dimerisation"/>
</dbReference>
<dbReference type="InterPro" id="IPR029063">
    <property type="entry name" value="SAM-dependent_MTases_sf"/>
</dbReference>
<dbReference type="InterPro" id="IPR036388">
    <property type="entry name" value="WH-like_DNA-bd_sf"/>
</dbReference>
<dbReference type="InterPro" id="IPR036390">
    <property type="entry name" value="WH_DNA-bd_sf"/>
</dbReference>
<dbReference type="PANTHER" id="PTHR43712:SF2">
    <property type="entry name" value="O-METHYLTRANSFERASE CICE"/>
    <property type="match status" value="1"/>
</dbReference>
<dbReference type="PANTHER" id="PTHR43712">
    <property type="entry name" value="PUTATIVE (AFU_ORTHOLOGUE AFUA_4G14580)-RELATED"/>
    <property type="match status" value="1"/>
</dbReference>
<dbReference type="Pfam" id="PF08100">
    <property type="entry name" value="Dimerisation"/>
    <property type="match status" value="1"/>
</dbReference>
<dbReference type="Pfam" id="PF00891">
    <property type="entry name" value="Methyltransf_2"/>
    <property type="match status" value="1"/>
</dbReference>
<dbReference type="PIRSF" id="PIRSF005739">
    <property type="entry name" value="O-mtase"/>
    <property type="match status" value="1"/>
</dbReference>
<dbReference type="SUPFAM" id="SSF53335">
    <property type="entry name" value="S-adenosyl-L-methionine-dependent methyltransferases"/>
    <property type="match status" value="1"/>
</dbReference>
<dbReference type="SUPFAM" id="SSF46785">
    <property type="entry name" value="Winged helix' DNA-binding domain"/>
    <property type="match status" value="1"/>
</dbReference>
<dbReference type="PROSITE" id="PS51683">
    <property type="entry name" value="SAM_OMT_II"/>
    <property type="match status" value="1"/>
</dbReference>
<name>OMT9_DICDI</name>
<accession>Q54GZ0</accession>
<comment type="catalytic activity">
    <reaction>
        <text>(3,5-dichloro-2,4,6-trihydroxyphenyl)hexan-1-one + S-adenosyl-L-methionine = 1-(3,5-dichloro-2,6-dihydroxy-4-methoxyphenyl)hexan-1-one + S-adenosyl-L-homocysteine + H(+)</text>
        <dbReference type="Rhea" id="RHEA:48396"/>
        <dbReference type="ChEBI" id="CHEBI:15378"/>
        <dbReference type="ChEBI" id="CHEBI:57856"/>
        <dbReference type="ChEBI" id="CHEBI:59789"/>
        <dbReference type="ChEBI" id="CHEBI:90397"/>
        <dbReference type="ChEBI" id="CHEBI:90398"/>
    </reaction>
</comment>
<comment type="similarity">
    <text evidence="1">Belongs to the class I-like SAM-binding methyltransferase superfamily. Cation-independent O-methyltransferase family. COMT subfamily.</text>
</comment>
<keyword id="KW-0489">Methyltransferase</keyword>
<keyword id="KW-1185">Reference proteome</keyword>
<keyword id="KW-0949">S-adenosyl-L-methionine</keyword>
<keyword id="KW-0808">Transferase</keyword>
<feature type="chain" id="PRO_0000367479" description="O-methyltransferase 9">
    <location>
        <begin position="1"/>
        <end position="357"/>
    </location>
</feature>
<feature type="active site" description="Proton acceptor" evidence="1">
    <location>
        <position position="267"/>
    </location>
</feature>
<feature type="binding site" evidence="1">
    <location>
        <position position="200"/>
    </location>
    <ligand>
        <name>S-adenosyl-L-methionine</name>
        <dbReference type="ChEBI" id="CHEBI:59789"/>
    </ligand>
</feature>
<feature type="binding site" evidence="1">
    <location>
        <position position="224"/>
    </location>
    <ligand>
        <name>S-adenosyl-L-methionine</name>
        <dbReference type="ChEBI" id="CHEBI:59789"/>
    </ligand>
</feature>
<feature type="binding site" evidence="1">
    <location>
        <position position="249"/>
    </location>
    <ligand>
        <name>S-adenosyl-L-methionine</name>
        <dbReference type="ChEBI" id="CHEBI:59789"/>
    </ligand>
</feature>
<feature type="binding site" evidence="1">
    <location>
        <position position="250"/>
    </location>
    <ligand>
        <name>S-adenosyl-L-methionine</name>
        <dbReference type="ChEBI" id="CHEBI:59789"/>
    </ligand>
</feature>
<feature type="binding site" evidence="1">
    <location>
        <position position="263"/>
    </location>
    <ligand>
        <name>S-adenosyl-L-methionine</name>
        <dbReference type="ChEBI" id="CHEBI:59789"/>
    </ligand>
</feature>
<gene>
    <name type="primary">omt9</name>
    <name type="ORF">DDB_G0289823</name>
</gene>
<protein>
    <recommendedName>
        <fullName>O-methyltransferase 9</fullName>
        <ecNumber>2.1.1.-</ecNumber>
    </recommendedName>
</protein>
<proteinExistence type="inferred from homology"/>